<sequence length="467" mass="52796">MTLADAQPQALNFECETGNYHTFCPISCVAWLYQKIEDSFFLVIGTKTCGYFLQNAMGVMIFAEPRYAMAELEEGDISAQLNDYNELKRLCEQIKRDRNPSVIVFIGTCTTEIIKMDLEGLAPKLESEIGIPIVVARANGLDYAFTQGEDTVLAAMAQRCPTQAPTAEADKEERNAIQKLMNFGRKQEDVKREESEYVDHPPLVMFGSVPDPIVTQLSLELKHQGIKVSGWLPAKRYTELPVIEEGYYVSGVNPFLSRTATTLMRRRKAKLIGSPFPIGPDGTRAWVEKICSVFNIEPKGLEEREAKIWQSVEDYLQLIRGKSVFFMGDNLLEISLARFLIRCGMTCHEIGIPYMDKRYQAAELDFLVKTCQEMGVPVPTIVEKPDNYNQLQRIHELKPDLVITGMAHANPLEARGISTKWSVEFTFAQIHGFGNTRDILELVTRPLRRNGALKDLGWEKLVEEARV</sequence>
<dbReference type="EC" id="1.3.7.7" evidence="1"/>
<dbReference type="EMBL" id="D12973">
    <property type="protein sequence ID" value="BAA02349.1"/>
    <property type="molecule type" value="Genomic_DNA"/>
</dbReference>
<dbReference type="PIR" id="S36669">
    <property type="entry name" value="S36669"/>
</dbReference>
<dbReference type="SMR" id="Q04607"/>
<dbReference type="KEGG" id="ag:BAA02349"/>
<dbReference type="BioCyc" id="MetaCyc:MONOMER-19730"/>
<dbReference type="UniPathway" id="UPA00670"/>
<dbReference type="GO" id="GO:0051539">
    <property type="term" value="F:4 iron, 4 sulfur cluster binding"/>
    <property type="evidence" value="ECO:0007669"/>
    <property type="project" value="UniProtKB-UniRule"/>
</dbReference>
<dbReference type="GO" id="GO:0005524">
    <property type="term" value="F:ATP binding"/>
    <property type="evidence" value="ECO:0007669"/>
    <property type="project" value="UniProtKB-UniRule"/>
</dbReference>
<dbReference type="GO" id="GO:0046872">
    <property type="term" value="F:metal ion binding"/>
    <property type="evidence" value="ECO:0007669"/>
    <property type="project" value="UniProtKB-KW"/>
</dbReference>
<dbReference type="GO" id="GO:0016730">
    <property type="term" value="F:oxidoreductase activity, acting on iron-sulfur proteins as donors"/>
    <property type="evidence" value="ECO:0007669"/>
    <property type="project" value="InterPro"/>
</dbReference>
<dbReference type="GO" id="GO:0016636">
    <property type="term" value="F:oxidoreductase activity, acting on the CH-CH group of donors, iron-sulfur protein as acceptor"/>
    <property type="evidence" value="ECO:0007669"/>
    <property type="project" value="UniProtKB-UniRule"/>
</dbReference>
<dbReference type="GO" id="GO:0036068">
    <property type="term" value="P:light-independent chlorophyll biosynthetic process"/>
    <property type="evidence" value="ECO:0007669"/>
    <property type="project" value="UniProtKB-UniRule"/>
</dbReference>
<dbReference type="GO" id="GO:0019685">
    <property type="term" value="P:photosynthesis, dark reaction"/>
    <property type="evidence" value="ECO:0007669"/>
    <property type="project" value="InterPro"/>
</dbReference>
<dbReference type="CDD" id="cd01979">
    <property type="entry name" value="Pchlide_reductase_N"/>
    <property type="match status" value="1"/>
</dbReference>
<dbReference type="Gene3D" id="3.40.50.1980">
    <property type="entry name" value="Nitrogenase molybdenum iron protein domain"/>
    <property type="match status" value="3"/>
</dbReference>
<dbReference type="HAMAP" id="MF_00352">
    <property type="entry name" value="ChlN_BchN"/>
    <property type="match status" value="1"/>
</dbReference>
<dbReference type="InterPro" id="IPR050293">
    <property type="entry name" value="LIPOR_BchN/ChlN"/>
</dbReference>
<dbReference type="InterPro" id="IPR000510">
    <property type="entry name" value="Nase/OxRdtase_comp1"/>
</dbReference>
<dbReference type="InterPro" id="IPR005970">
    <property type="entry name" value="Protochl_reductN"/>
</dbReference>
<dbReference type="NCBIfam" id="TIGR01279">
    <property type="entry name" value="DPOR_bchN"/>
    <property type="match status" value="1"/>
</dbReference>
<dbReference type="NCBIfam" id="NF002768">
    <property type="entry name" value="PRK02842.1"/>
    <property type="match status" value="1"/>
</dbReference>
<dbReference type="PANTHER" id="PTHR39429">
    <property type="entry name" value="LIGHT-INDEPENDENT PROTOCHLOROPHYLLIDE REDUCTASE SUBUNIT N"/>
    <property type="match status" value="1"/>
</dbReference>
<dbReference type="PANTHER" id="PTHR39429:SF3">
    <property type="entry name" value="LIGHT-INDEPENDENT PROTOCHLOROPHYLLIDE REDUCTASE SUBUNIT N"/>
    <property type="match status" value="1"/>
</dbReference>
<dbReference type="Pfam" id="PF00148">
    <property type="entry name" value="Oxidored_nitro"/>
    <property type="match status" value="1"/>
</dbReference>
<dbReference type="PIRSF" id="PIRSF000162">
    <property type="entry name" value="P_chlorophyll_rd"/>
    <property type="match status" value="1"/>
</dbReference>
<dbReference type="SUPFAM" id="SSF53807">
    <property type="entry name" value="Helical backbone' metal receptor"/>
    <property type="match status" value="1"/>
</dbReference>
<accession>Q04607</accession>
<proteinExistence type="inferred from homology"/>
<comment type="function">
    <text evidence="1">Component of the dark-operative protochlorophyllide reductase (DPOR) that uses Mg-ATP and reduced ferredoxin to reduce ring D of protochlorophyllide (Pchlide) to form chlorophyllide a (Chlide). This reaction is light-independent. The NB-protein (ChlN-ChlB) is the catalytic component of the complex.</text>
</comment>
<comment type="catalytic activity">
    <reaction evidence="1">
        <text>chlorophyllide a + oxidized 2[4Fe-4S]-[ferredoxin] + 2 ADP + 2 phosphate = protochlorophyllide a + reduced 2[4Fe-4S]-[ferredoxin] + 2 ATP + 2 H2O</text>
        <dbReference type="Rhea" id="RHEA:28202"/>
        <dbReference type="Rhea" id="RHEA-COMP:10002"/>
        <dbReference type="Rhea" id="RHEA-COMP:10004"/>
        <dbReference type="ChEBI" id="CHEBI:15377"/>
        <dbReference type="ChEBI" id="CHEBI:30616"/>
        <dbReference type="ChEBI" id="CHEBI:33722"/>
        <dbReference type="ChEBI" id="CHEBI:33723"/>
        <dbReference type="ChEBI" id="CHEBI:43474"/>
        <dbReference type="ChEBI" id="CHEBI:83348"/>
        <dbReference type="ChEBI" id="CHEBI:83350"/>
        <dbReference type="ChEBI" id="CHEBI:456216"/>
        <dbReference type="EC" id="1.3.7.7"/>
    </reaction>
</comment>
<comment type="cofactor">
    <cofactor evidence="1">
        <name>[4Fe-4S] cluster</name>
        <dbReference type="ChEBI" id="CHEBI:49883"/>
    </cofactor>
    <text evidence="1">Binds 1 [4Fe-4S] cluster per heterodimer. The cluster is bound at the heterodimer interface by residues from both subunits.</text>
</comment>
<comment type="pathway">
    <text evidence="1">Porphyrin-containing compound metabolism; chlorophyll biosynthesis (light-independent).</text>
</comment>
<comment type="subunit">
    <text evidence="1">Protochlorophyllide reductase is composed of three subunits; ChlL, ChlN and ChlB. Forms a heterotetramer of two ChlB and two ChlN subunits.</text>
</comment>
<comment type="similarity">
    <text evidence="1">Belongs to the BchN/ChlN family.</text>
</comment>
<organism>
    <name type="scientific">Leptolyngbya boryana</name>
    <name type="common">Plectonema boryanum</name>
    <dbReference type="NCBI Taxonomy" id="1184"/>
    <lineage>
        <taxon>Bacteria</taxon>
        <taxon>Bacillati</taxon>
        <taxon>Cyanobacteriota</taxon>
        <taxon>Cyanophyceae</taxon>
        <taxon>Leptolyngbyales</taxon>
        <taxon>Leptolyngbyaceae</taxon>
        <taxon>Leptolyngbya group</taxon>
        <taxon>Leptolyngbya</taxon>
    </lineage>
</organism>
<feature type="chain" id="PRO_0000208601" description="Light-independent protochlorophyllide reductase subunit N">
    <location>
        <begin position="1"/>
        <end position="467"/>
    </location>
</feature>
<feature type="binding site" evidence="1">
    <location>
        <position position="24"/>
    </location>
    <ligand>
        <name>[4Fe-4S] cluster</name>
        <dbReference type="ChEBI" id="CHEBI:49883"/>
        <note>ligand shared with heterodimeric partner</note>
    </ligand>
</feature>
<feature type="binding site" evidence="1">
    <location>
        <position position="49"/>
    </location>
    <ligand>
        <name>[4Fe-4S] cluster</name>
        <dbReference type="ChEBI" id="CHEBI:49883"/>
        <note>ligand shared with heterodimeric partner</note>
    </ligand>
</feature>
<feature type="binding site" evidence="1">
    <location>
        <position position="109"/>
    </location>
    <ligand>
        <name>[4Fe-4S] cluster</name>
        <dbReference type="ChEBI" id="CHEBI:49883"/>
        <note>ligand shared with heterodimeric partner</note>
    </ligand>
</feature>
<name>CHLN_LEPBY</name>
<evidence type="ECO:0000255" key="1">
    <source>
        <dbReference type="HAMAP-Rule" id="MF_00352"/>
    </source>
</evidence>
<keyword id="KW-0004">4Fe-4S</keyword>
<keyword id="KW-0067">ATP-binding</keyword>
<keyword id="KW-0149">Chlorophyll biosynthesis</keyword>
<keyword id="KW-0408">Iron</keyword>
<keyword id="KW-0411">Iron-sulfur</keyword>
<keyword id="KW-0479">Metal-binding</keyword>
<keyword id="KW-0547">Nucleotide-binding</keyword>
<keyword id="KW-0560">Oxidoreductase</keyword>
<keyword id="KW-0602">Photosynthesis</keyword>
<protein>
    <recommendedName>
        <fullName evidence="1">Light-independent protochlorophyllide reductase subunit N</fullName>
        <shortName evidence="1">DPOR subunit N</shortName>
        <shortName evidence="1">LI-POR subunit N</shortName>
        <ecNumber evidence="1">1.3.7.7</ecNumber>
    </recommendedName>
</protein>
<reference key="1">
    <citation type="journal article" date="1993" name="Plant Cell Physiol.">
        <title>Identification of a nifDK-like gene (ORF467) involved in the biosynthesis of chlorophyll in the cyanobacterium Plectonema boryanum.</title>
        <authorList>
            <person name="Fujita Y."/>
            <person name="Matsumoto H."/>
            <person name="Takahashi Y."/>
            <person name="Matsubara H."/>
        </authorList>
    </citation>
    <scope>NUCLEOTIDE SEQUENCE [GENOMIC DNA]</scope>
    <source>
        <strain>ATCC 27894 / CCAP 1463/1 / IAM M-101 / PCC 6306 / UTEX 581</strain>
    </source>
</reference>
<gene>
    <name evidence="1" type="primary">chlN</name>
</gene>